<protein>
    <recommendedName>
        <fullName>NADH-ubiquinone oxidoreductase chain 4</fullName>
        <ecNumber evidence="1">7.1.1.2</ecNumber>
    </recommendedName>
    <alternativeName>
        <fullName>NADH dehydrogenase subunit 4</fullName>
    </alternativeName>
</protein>
<comment type="function">
    <text evidence="1">Core subunit of the mitochondrial membrane respiratory chain NADH dehydrogenase (Complex I) which catalyzes electron transfer from NADH through the respiratory chain, using ubiquinone as an electron acceptor. Essential for the catalytic activity and assembly of complex I.</text>
</comment>
<comment type="catalytic activity">
    <reaction evidence="1">
        <text>a ubiquinone + NADH + 5 H(+)(in) = a ubiquinol + NAD(+) + 4 H(+)(out)</text>
        <dbReference type="Rhea" id="RHEA:29091"/>
        <dbReference type="Rhea" id="RHEA-COMP:9565"/>
        <dbReference type="Rhea" id="RHEA-COMP:9566"/>
        <dbReference type="ChEBI" id="CHEBI:15378"/>
        <dbReference type="ChEBI" id="CHEBI:16389"/>
        <dbReference type="ChEBI" id="CHEBI:17976"/>
        <dbReference type="ChEBI" id="CHEBI:57540"/>
        <dbReference type="ChEBI" id="CHEBI:57945"/>
        <dbReference type="EC" id="7.1.1.2"/>
    </reaction>
</comment>
<comment type="subunit">
    <text evidence="2">Core subunit of respiratory chain NADH dehydrogenase (Complex I) which is composed of 45 different subunits.</text>
</comment>
<comment type="subcellular location">
    <subcellularLocation>
        <location evidence="2">Mitochondrion inner membrane</location>
        <topology evidence="3">Multi-pass membrane protein</topology>
    </subcellularLocation>
</comment>
<comment type="similarity">
    <text evidence="4">Belongs to the complex I subunit 4 family.</text>
</comment>
<sequence>MLKIIIPTIMLLPVTWFSANSMVWINITLHSLTISLMSLSFLNQTDSNSNNFSSTFFSDPLSSPLLTLTMWLLPLTIMASQHHLSKEPWERKKYFLFTLISLQLFLIMTFTATELIMFYILFESTLIPTLIIITRWGNQTERLNAGLYFLFYTLIGSLPLLVALSFIQKHMGTLNLFMMTYWSQELPNSWSSNLMWMACIMAFMIKMPLYGLHLWLPKAHVEAPIAGSMILAAILLKLGGYGMMRITTILNPLTKFMAYPFLMLCLWGMIMTSLICLRQTDLKSLIAYSSVSHMALVIVAILIQTPWSFMGATALMIAHGLTSSMLFCLANSNYERIHNRTMLLARGLQSLLPLMSTWWLLASLTNLALPPSINLIGELFITMATFSWSNMTIILTGLNMLITATYSLHMLAMTQRGKSLYHMHNLNPSLTRENTLMSMHIFPLLLLTLNPNILMGPTY</sequence>
<name>NU4M_LEPST</name>
<accession>Q85DA7</accession>
<keyword id="KW-0249">Electron transport</keyword>
<keyword id="KW-0472">Membrane</keyword>
<keyword id="KW-0496">Mitochondrion</keyword>
<keyword id="KW-0999">Mitochondrion inner membrane</keyword>
<keyword id="KW-0520">NAD</keyword>
<keyword id="KW-0679">Respiratory chain</keyword>
<keyword id="KW-1278">Translocase</keyword>
<keyword id="KW-0812">Transmembrane</keyword>
<keyword id="KW-1133">Transmembrane helix</keyword>
<keyword id="KW-0813">Transport</keyword>
<keyword id="KW-0830">Ubiquinone</keyword>
<evidence type="ECO:0000250" key="1">
    <source>
        <dbReference type="UniProtKB" id="P03905"/>
    </source>
</evidence>
<evidence type="ECO:0000250" key="2">
    <source>
        <dbReference type="UniProtKB" id="P03910"/>
    </source>
</evidence>
<evidence type="ECO:0000255" key="3"/>
<evidence type="ECO:0000305" key="4"/>
<geneLocation type="mitochondrion"/>
<feature type="chain" id="PRO_0000117948" description="NADH-ubiquinone oxidoreductase chain 4">
    <location>
        <begin position="1"/>
        <end position="459"/>
    </location>
</feature>
<feature type="transmembrane region" description="Helical" evidence="3">
    <location>
        <begin position="4"/>
        <end position="24"/>
    </location>
</feature>
<feature type="transmembrane region" description="Helical" evidence="3">
    <location>
        <begin position="60"/>
        <end position="80"/>
    </location>
</feature>
<feature type="transmembrane region" description="Helical" evidence="3">
    <location>
        <begin position="94"/>
        <end position="112"/>
    </location>
</feature>
<feature type="transmembrane region" description="Helical" evidence="3">
    <location>
        <begin position="116"/>
        <end position="138"/>
    </location>
</feature>
<feature type="transmembrane region" description="Helical" evidence="3">
    <location>
        <begin position="147"/>
        <end position="167"/>
    </location>
</feature>
<feature type="transmembrane region" description="Helical" evidence="3">
    <location>
        <begin position="196"/>
        <end position="216"/>
    </location>
</feature>
<feature type="transmembrane region" description="Helical" evidence="3">
    <location>
        <begin position="224"/>
        <end position="244"/>
    </location>
</feature>
<feature type="transmembrane region" description="Helical" evidence="3">
    <location>
        <begin position="256"/>
        <end position="276"/>
    </location>
</feature>
<feature type="transmembrane region" description="Helical" evidence="3">
    <location>
        <begin position="284"/>
        <end position="303"/>
    </location>
</feature>
<feature type="transmembrane region" description="Helical" evidence="3">
    <location>
        <begin position="308"/>
        <end position="330"/>
    </location>
</feature>
<feature type="transmembrane region" description="Helical" evidence="3">
    <location>
        <begin position="351"/>
        <end position="371"/>
    </location>
</feature>
<feature type="transmembrane region" description="Helical" evidence="3">
    <location>
        <begin position="375"/>
        <end position="395"/>
    </location>
</feature>
<feature type="transmembrane region" description="Helical" evidence="3">
    <location>
        <begin position="436"/>
        <end position="456"/>
    </location>
</feature>
<gene>
    <name type="primary">MT-ND4</name>
    <name type="synonym">MTND4</name>
    <name type="synonym">NADH4</name>
    <name type="synonym">ND4</name>
</gene>
<dbReference type="EC" id="7.1.1.2" evidence="1"/>
<dbReference type="EMBL" id="AF224597">
    <property type="protein sequence ID" value="AAP33655.1"/>
    <property type="molecule type" value="Genomic_DNA"/>
</dbReference>
<dbReference type="SMR" id="Q85DA7"/>
<dbReference type="GO" id="GO:0005743">
    <property type="term" value="C:mitochondrial inner membrane"/>
    <property type="evidence" value="ECO:0000250"/>
    <property type="project" value="UniProtKB"/>
</dbReference>
<dbReference type="GO" id="GO:0008137">
    <property type="term" value="F:NADH dehydrogenase (ubiquinone) activity"/>
    <property type="evidence" value="ECO:0000250"/>
    <property type="project" value="UniProtKB"/>
</dbReference>
<dbReference type="GO" id="GO:0048039">
    <property type="term" value="F:ubiquinone binding"/>
    <property type="evidence" value="ECO:0007669"/>
    <property type="project" value="TreeGrafter"/>
</dbReference>
<dbReference type="GO" id="GO:0015990">
    <property type="term" value="P:electron transport coupled proton transport"/>
    <property type="evidence" value="ECO:0007669"/>
    <property type="project" value="TreeGrafter"/>
</dbReference>
<dbReference type="GO" id="GO:0006120">
    <property type="term" value="P:mitochondrial electron transport, NADH to ubiquinone"/>
    <property type="evidence" value="ECO:0000250"/>
    <property type="project" value="UniProtKB"/>
</dbReference>
<dbReference type="GO" id="GO:0032981">
    <property type="term" value="P:mitochondrial respiratory chain complex I assembly"/>
    <property type="evidence" value="ECO:0000250"/>
    <property type="project" value="UniProtKB"/>
</dbReference>
<dbReference type="InterPro" id="IPR000260">
    <property type="entry name" value="NADH4_N"/>
</dbReference>
<dbReference type="InterPro" id="IPR010227">
    <property type="entry name" value="NADH_Q_OxRdtase_chainM/4"/>
</dbReference>
<dbReference type="InterPro" id="IPR003918">
    <property type="entry name" value="NADH_UbQ_OxRdtase"/>
</dbReference>
<dbReference type="InterPro" id="IPR001750">
    <property type="entry name" value="ND/Mrp_TM"/>
</dbReference>
<dbReference type="NCBIfam" id="TIGR01972">
    <property type="entry name" value="NDH_I_M"/>
    <property type="match status" value="1"/>
</dbReference>
<dbReference type="PANTHER" id="PTHR43507">
    <property type="entry name" value="NADH-UBIQUINONE OXIDOREDUCTASE CHAIN 4"/>
    <property type="match status" value="1"/>
</dbReference>
<dbReference type="PANTHER" id="PTHR43507:SF20">
    <property type="entry name" value="NADH-UBIQUINONE OXIDOREDUCTASE CHAIN 4"/>
    <property type="match status" value="1"/>
</dbReference>
<dbReference type="Pfam" id="PF01059">
    <property type="entry name" value="Oxidored_q5_N"/>
    <property type="match status" value="1"/>
</dbReference>
<dbReference type="Pfam" id="PF00361">
    <property type="entry name" value="Proton_antipo_M"/>
    <property type="match status" value="1"/>
</dbReference>
<dbReference type="PRINTS" id="PR01437">
    <property type="entry name" value="NUOXDRDTASE4"/>
</dbReference>
<organism>
    <name type="scientific">Lepilemur septentrionalis</name>
    <name type="common">Northern sportive lemur</name>
    <dbReference type="NCBI Taxonomy" id="78584"/>
    <lineage>
        <taxon>Eukaryota</taxon>
        <taxon>Metazoa</taxon>
        <taxon>Chordata</taxon>
        <taxon>Craniata</taxon>
        <taxon>Vertebrata</taxon>
        <taxon>Euteleostomi</taxon>
        <taxon>Mammalia</taxon>
        <taxon>Eutheria</taxon>
        <taxon>Euarchontoglires</taxon>
        <taxon>Primates</taxon>
        <taxon>Strepsirrhini</taxon>
        <taxon>Lemuriformes</taxon>
        <taxon>Lepilemuridae</taxon>
        <taxon>Lepilemur</taxon>
    </lineage>
</organism>
<proteinExistence type="inferred from homology"/>
<reference key="1">
    <citation type="journal article" date="2003" name="Proc. Natl. Acad. Sci. U.S.A.">
        <title>A molecular approach to comparative phylogeography of extant Malagasy lemurs.</title>
        <authorList>
            <person name="Pastorini J."/>
            <person name="Thalmann U."/>
            <person name="Martin R.D."/>
        </authorList>
    </citation>
    <scope>NUCLEOTIDE SEQUENCE [GENOMIC DNA]</scope>
</reference>